<organism>
    <name type="scientific">Parvibaculum lavamentivorans (strain DS-1 / DSM 13023 / NCIMB 13966)</name>
    <dbReference type="NCBI Taxonomy" id="402881"/>
    <lineage>
        <taxon>Bacteria</taxon>
        <taxon>Pseudomonadati</taxon>
        <taxon>Pseudomonadota</taxon>
        <taxon>Alphaproteobacteria</taxon>
        <taxon>Hyphomicrobiales</taxon>
        <taxon>Parvibaculaceae</taxon>
        <taxon>Parvibaculum</taxon>
    </lineage>
</organism>
<name>DAPD_PARL1</name>
<feature type="chain" id="PRO_1000072853" description="2,3,4,5-tetrahydropyridine-2,6-dicarboxylate N-succinyltransferase">
    <location>
        <begin position="1"/>
        <end position="281"/>
    </location>
</feature>
<feature type="binding site" evidence="1">
    <location>
        <position position="108"/>
    </location>
    <ligand>
        <name>substrate</name>
    </ligand>
</feature>
<feature type="binding site" evidence="1">
    <location>
        <position position="145"/>
    </location>
    <ligand>
        <name>substrate</name>
    </ligand>
</feature>
<evidence type="ECO:0000255" key="1">
    <source>
        <dbReference type="HAMAP-Rule" id="MF_00811"/>
    </source>
</evidence>
<gene>
    <name evidence="1" type="primary">dapD</name>
    <name type="ordered locus">Plav_0267</name>
</gene>
<accession>A7HPQ7</accession>
<proteinExistence type="inferred from homology"/>
<protein>
    <recommendedName>
        <fullName evidence="1">2,3,4,5-tetrahydropyridine-2,6-dicarboxylate N-succinyltransferase</fullName>
        <ecNumber evidence="1">2.3.1.117</ecNumber>
    </recommendedName>
    <alternativeName>
        <fullName evidence="1">Tetrahydrodipicolinate N-succinyltransferase</fullName>
        <shortName evidence="1">THDP succinyltransferase</shortName>
        <shortName evidence="1">THP succinyltransferase</shortName>
        <shortName evidence="1">Tetrahydropicolinate succinylase</shortName>
    </alternativeName>
</protein>
<comment type="catalytic activity">
    <reaction evidence="1">
        <text>(S)-2,3,4,5-tetrahydrodipicolinate + succinyl-CoA + H2O = (S)-2-succinylamino-6-oxoheptanedioate + CoA</text>
        <dbReference type="Rhea" id="RHEA:17325"/>
        <dbReference type="ChEBI" id="CHEBI:15377"/>
        <dbReference type="ChEBI" id="CHEBI:15685"/>
        <dbReference type="ChEBI" id="CHEBI:16845"/>
        <dbReference type="ChEBI" id="CHEBI:57287"/>
        <dbReference type="ChEBI" id="CHEBI:57292"/>
        <dbReference type="EC" id="2.3.1.117"/>
    </reaction>
</comment>
<comment type="pathway">
    <text evidence="1">Amino-acid biosynthesis; L-lysine biosynthesis via DAP pathway; LL-2,6-diaminopimelate from (S)-tetrahydrodipicolinate (succinylase route): step 1/3.</text>
</comment>
<comment type="subunit">
    <text evidence="1">Homotrimer.</text>
</comment>
<comment type="subcellular location">
    <subcellularLocation>
        <location evidence="1">Cytoplasm</location>
    </subcellularLocation>
</comment>
<comment type="similarity">
    <text evidence="1">Belongs to the transferase hexapeptide repeat family.</text>
</comment>
<keyword id="KW-0012">Acyltransferase</keyword>
<keyword id="KW-0028">Amino-acid biosynthesis</keyword>
<keyword id="KW-0963">Cytoplasm</keyword>
<keyword id="KW-0220">Diaminopimelate biosynthesis</keyword>
<keyword id="KW-0457">Lysine biosynthesis</keyword>
<keyword id="KW-1185">Reference proteome</keyword>
<keyword id="KW-0677">Repeat</keyword>
<keyword id="KW-0808">Transferase</keyword>
<reference key="1">
    <citation type="journal article" date="2011" name="Stand. Genomic Sci.">
        <title>Complete genome sequence of Parvibaculum lavamentivorans type strain (DS-1(T)).</title>
        <authorList>
            <person name="Schleheck D."/>
            <person name="Weiss M."/>
            <person name="Pitluck S."/>
            <person name="Bruce D."/>
            <person name="Land M.L."/>
            <person name="Han S."/>
            <person name="Saunders E."/>
            <person name="Tapia R."/>
            <person name="Detter C."/>
            <person name="Brettin T."/>
            <person name="Han J."/>
            <person name="Woyke T."/>
            <person name="Goodwin L."/>
            <person name="Pennacchio L."/>
            <person name="Nolan M."/>
            <person name="Cook A.M."/>
            <person name="Kjelleberg S."/>
            <person name="Thomas T."/>
        </authorList>
    </citation>
    <scope>NUCLEOTIDE SEQUENCE [LARGE SCALE GENOMIC DNA]</scope>
    <source>
        <strain>DS-1 / DSM 13023 / NCIMB 13966</strain>
    </source>
</reference>
<dbReference type="EC" id="2.3.1.117" evidence="1"/>
<dbReference type="EMBL" id="CP000774">
    <property type="protein sequence ID" value="ABS61890.1"/>
    <property type="molecule type" value="Genomic_DNA"/>
</dbReference>
<dbReference type="RefSeq" id="WP_011995181.1">
    <property type="nucleotide sequence ID" value="NC_009719.1"/>
</dbReference>
<dbReference type="SMR" id="A7HPQ7"/>
<dbReference type="STRING" id="402881.Plav_0267"/>
<dbReference type="KEGG" id="pla:Plav_0267"/>
<dbReference type="eggNOG" id="COG2171">
    <property type="taxonomic scope" value="Bacteria"/>
</dbReference>
<dbReference type="HOGENOM" id="CLU_050859_0_1_5"/>
<dbReference type="OrthoDB" id="9775362at2"/>
<dbReference type="UniPathway" id="UPA00034">
    <property type="reaction ID" value="UER00019"/>
</dbReference>
<dbReference type="Proteomes" id="UP000006377">
    <property type="component" value="Chromosome"/>
</dbReference>
<dbReference type="GO" id="GO:0005737">
    <property type="term" value="C:cytoplasm"/>
    <property type="evidence" value="ECO:0007669"/>
    <property type="project" value="UniProtKB-SubCell"/>
</dbReference>
<dbReference type="GO" id="GO:0008666">
    <property type="term" value="F:2,3,4,5-tetrahydropyridine-2,6-dicarboxylate N-succinyltransferase activity"/>
    <property type="evidence" value="ECO:0007669"/>
    <property type="project" value="UniProtKB-UniRule"/>
</dbReference>
<dbReference type="GO" id="GO:0019877">
    <property type="term" value="P:diaminopimelate biosynthetic process"/>
    <property type="evidence" value="ECO:0007669"/>
    <property type="project" value="UniProtKB-UniRule"/>
</dbReference>
<dbReference type="GO" id="GO:0009089">
    <property type="term" value="P:lysine biosynthetic process via diaminopimelate"/>
    <property type="evidence" value="ECO:0007669"/>
    <property type="project" value="UniProtKB-UniRule"/>
</dbReference>
<dbReference type="CDD" id="cd03350">
    <property type="entry name" value="LbH_THP_succinylT"/>
    <property type="match status" value="1"/>
</dbReference>
<dbReference type="Gene3D" id="2.160.10.10">
    <property type="entry name" value="Hexapeptide repeat proteins"/>
    <property type="match status" value="1"/>
</dbReference>
<dbReference type="Gene3D" id="1.10.166.10">
    <property type="entry name" value="Tetrahydrodipicolinate-N-succinyltransferase, N-terminal domain"/>
    <property type="match status" value="1"/>
</dbReference>
<dbReference type="HAMAP" id="MF_00811">
    <property type="entry name" value="DapD"/>
    <property type="match status" value="1"/>
</dbReference>
<dbReference type="InterPro" id="IPR005664">
    <property type="entry name" value="DapD_Trfase_Hexpep_rpt_fam"/>
</dbReference>
<dbReference type="InterPro" id="IPR001451">
    <property type="entry name" value="Hexapep"/>
</dbReference>
<dbReference type="InterPro" id="IPR023180">
    <property type="entry name" value="THP_succinylTrfase_dom1"/>
</dbReference>
<dbReference type="InterPro" id="IPR037133">
    <property type="entry name" value="THP_succinylTrfase_N_sf"/>
</dbReference>
<dbReference type="InterPro" id="IPR050179">
    <property type="entry name" value="Trans_hexapeptide_repeat"/>
</dbReference>
<dbReference type="InterPro" id="IPR011004">
    <property type="entry name" value="Trimer_LpxA-like_sf"/>
</dbReference>
<dbReference type="NCBIfam" id="TIGR00965">
    <property type="entry name" value="dapD"/>
    <property type="match status" value="1"/>
</dbReference>
<dbReference type="NCBIfam" id="NF008808">
    <property type="entry name" value="PRK11830.1"/>
    <property type="match status" value="1"/>
</dbReference>
<dbReference type="PANTHER" id="PTHR43300:SF10">
    <property type="entry name" value="2,3,4,5-TETRAHYDROPYRIDINE-2,6-DICARBOXYLATE N-ACETYLTRANSFERASE"/>
    <property type="match status" value="1"/>
</dbReference>
<dbReference type="PANTHER" id="PTHR43300">
    <property type="entry name" value="ACETYLTRANSFERASE"/>
    <property type="match status" value="1"/>
</dbReference>
<dbReference type="Pfam" id="PF14602">
    <property type="entry name" value="Hexapep_2"/>
    <property type="match status" value="1"/>
</dbReference>
<dbReference type="Pfam" id="PF14805">
    <property type="entry name" value="THDPS_N_2"/>
    <property type="match status" value="1"/>
</dbReference>
<dbReference type="SUPFAM" id="SSF51161">
    <property type="entry name" value="Trimeric LpxA-like enzymes"/>
    <property type="match status" value="1"/>
</dbReference>
<sequence>MSLSDLKPVIERAFENRDQINAQTKGEVRDAVNEALNALDSGKARVAEKFQGSWEVHQWLKMAVLLSFRLNDMSTIAGGPGENTNWWDKVPSKFEGWGEAEFRKAGFRAVPGAIVRRSAYIAPNVVLMPSFVNLGAHVDEGTMVDTWVTVGSCAQIGKNCHLSGGVGIGGVLEPLQANPVIIEDNCFIGARSEVVEGVIVGEGAVLSMGVFISASTKIIDRATGEVHIGKVPPYSVVVPGSLPGKANPDGSPAPSLYCCVIVKTVDAQTRAKTAINELLRD</sequence>